<feature type="chain" id="PRO_0000427498" description="Uncharacterized protein MT2359">
    <location>
        <begin position="1"/>
        <end position="80"/>
    </location>
</feature>
<gene>
    <name type="ordered locus">MT2359</name>
</gene>
<protein>
    <recommendedName>
        <fullName>Uncharacterized protein MT2359</fullName>
    </recommendedName>
</protein>
<proteinExistence type="predicted"/>
<sequence length="80" mass="8591">MHAKVGDYLVVKGTTTERHDQHAEIIEVRSADGSPPYVVRWLVNGHETTVYPGSDAVVVTATEHAEAEKRAAARAGHAAT</sequence>
<comment type="similarity">
    <text evidence="1">To M.leprae U650M.</text>
</comment>
<name>Y2302_MYCTO</name>
<organism>
    <name type="scientific">Mycobacterium tuberculosis (strain CDC 1551 / Oshkosh)</name>
    <dbReference type="NCBI Taxonomy" id="83331"/>
    <lineage>
        <taxon>Bacteria</taxon>
        <taxon>Bacillati</taxon>
        <taxon>Actinomycetota</taxon>
        <taxon>Actinomycetes</taxon>
        <taxon>Mycobacteriales</taxon>
        <taxon>Mycobacteriaceae</taxon>
        <taxon>Mycobacterium</taxon>
        <taxon>Mycobacterium tuberculosis complex</taxon>
    </lineage>
</organism>
<dbReference type="EMBL" id="AE000516">
    <property type="protein sequence ID" value="AAK46644.1"/>
    <property type="molecule type" value="Genomic_DNA"/>
</dbReference>
<dbReference type="PIR" id="B70734">
    <property type="entry name" value="B70734"/>
</dbReference>
<dbReference type="RefSeq" id="WP_003411866.1">
    <property type="nucleotide sequence ID" value="NZ_KK341227.1"/>
</dbReference>
<dbReference type="BMRB" id="P9WLD4"/>
<dbReference type="SMR" id="P9WLD4"/>
<dbReference type="KEGG" id="mtc:MT2359"/>
<dbReference type="PATRIC" id="fig|83331.31.peg.2539"/>
<dbReference type="HOGENOM" id="CLU_172512_0_0_11"/>
<dbReference type="Proteomes" id="UP000001020">
    <property type="component" value="Chromosome"/>
</dbReference>
<dbReference type="Gene3D" id="2.30.30.440">
    <property type="entry name" value="Domain of unknown function DUF1918"/>
    <property type="match status" value="1"/>
</dbReference>
<dbReference type="InterPro" id="IPR015035">
    <property type="entry name" value="DUF1918"/>
</dbReference>
<dbReference type="Pfam" id="PF08940">
    <property type="entry name" value="DUF1918"/>
    <property type="match status" value="1"/>
</dbReference>
<dbReference type="SUPFAM" id="SSF50118">
    <property type="entry name" value="Cell growth inhibitor/plasmid maintenance toxic component"/>
    <property type="match status" value="1"/>
</dbReference>
<keyword id="KW-1185">Reference proteome</keyword>
<evidence type="ECO:0000305" key="1"/>
<accession>P9WLD4</accession>
<accession>L0T979</accession>
<accession>P64983</accession>
<accession>Q50663</accession>
<reference key="1">
    <citation type="journal article" date="2002" name="J. Bacteriol.">
        <title>Whole-genome comparison of Mycobacterium tuberculosis clinical and laboratory strains.</title>
        <authorList>
            <person name="Fleischmann R.D."/>
            <person name="Alland D."/>
            <person name="Eisen J.A."/>
            <person name="Carpenter L."/>
            <person name="White O."/>
            <person name="Peterson J.D."/>
            <person name="DeBoy R.T."/>
            <person name="Dodson R.J."/>
            <person name="Gwinn M.L."/>
            <person name="Haft D.H."/>
            <person name="Hickey E.K."/>
            <person name="Kolonay J.F."/>
            <person name="Nelson W.C."/>
            <person name="Umayam L.A."/>
            <person name="Ermolaeva M.D."/>
            <person name="Salzberg S.L."/>
            <person name="Delcher A."/>
            <person name="Utterback T.R."/>
            <person name="Weidman J.F."/>
            <person name="Khouri H.M."/>
            <person name="Gill J."/>
            <person name="Mikula A."/>
            <person name="Bishai W."/>
            <person name="Jacobs W.R. Jr."/>
            <person name="Venter J.C."/>
            <person name="Fraser C.M."/>
        </authorList>
    </citation>
    <scope>NUCLEOTIDE SEQUENCE [LARGE SCALE GENOMIC DNA]</scope>
    <source>
        <strain>CDC 1551 / Oshkosh</strain>
    </source>
</reference>